<gene>
    <name type="primary">yfeK</name>
    <name type="ordered locus">STM2438</name>
</gene>
<organism>
    <name type="scientific">Salmonella typhimurium (strain LT2 / SGSC1412 / ATCC 700720)</name>
    <dbReference type="NCBI Taxonomy" id="99287"/>
    <lineage>
        <taxon>Bacteria</taxon>
        <taxon>Pseudomonadati</taxon>
        <taxon>Pseudomonadota</taxon>
        <taxon>Gammaproteobacteria</taxon>
        <taxon>Enterobacterales</taxon>
        <taxon>Enterobacteriaceae</taxon>
        <taxon>Salmonella</taxon>
    </lineage>
</organism>
<protein>
    <recommendedName>
        <fullName>Uncharacterized protein YfeK</fullName>
    </recommendedName>
</protein>
<evidence type="ECO:0000255" key="1"/>
<evidence type="ECO:0000305" key="2"/>
<name>YFEK_SALTY</name>
<keyword id="KW-1185">Reference proteome</keyword>
<keyword id="KW-0732">Signal</keyword>
<reference key="1">
    <citation type="journal article" date="1995" name="DNA Seq.">
        <title>Nucleotide sequence of the region between crr and cysM in Salmonella typhimurium: five novel ORFs including one encoding a putative transcriptional regulator of the phosphotransferase system.</title>
        <authorList>
            <person name="Titgemeyer F.M."/>
            <person name="Reizer J."/>
            <person name="Reizer A."/>
            <person name="Tang J."/>
            <person name="Parr T.R. Jr."/>
            <person name="Saier M.H. Jr."/>
        </authorList>
    </citation>
    <scope>NUCLEOTIDE SEQUENCE [GENOMIC DNA]</scope>
    <source>
        <strain>LT2</strain>
    </source>
</reference>
<reference key="2">
    <citation type="journal article" date="2001" name="Nature">
        <title>Complete genome sequence of Salmonella enterica serovar Typhimurium LT2.</title>
        <authorList>
            <person name="McClelland M."/>
            <person name="Sanderson K.E."/>
            <person name="Spieth J."/>
            <person name="Clifton S.W."/>
            <person name="Latreille P."/>
            <person name="Courtney L."/>
            <person name="Porwollik S."/>
            <person name="Ali J."/>
            <person name="Dante M."/>
            <person name="Du F."/>
            <person name="Hou S."/>
            <person name="Layman D."/>
            <person name="Leonard S."/>
            <person name="Nguyen C."/>
            <person name="Scott K."/>
            <person name="Holmes A."/>
            <person name="Grewal N."/>
            <person name="Mulvaney E."/>
            <person name="Ryan E."/>
            <person name="Sun H."/>
            <person name="Florea L."/>
            <person name="Miller W."/>
            <person name="Stoneking T."/>
            <person name="Nhan M."/>
            <person name="Waterston R."/>
            <person name="Wilson R.K."/>
        </authorList>
    </citation>
    <scope>NUCLEOTIDE SEQUENCE [LARGE SCALE GENOMIC DNA]</scope>
    <source>
        <strain>LT2 / SGSC1412 / ATCC 700720</strain>
    </source>
</reference>
<sequence>MKKIVCAVVALLLTLPAWANVNAHEEARINAMLNALAQKKDLTFVRNGDAHNCEEAVSHLRLKLGNTRNRIDTAEQFIDKVASSSSITGKPYIVKIPGKSDENAQPYLHALIAETDKNVE</sequence>
<accession>P40195</accession>
<dbReference type="EMBL" id="U11243">
    <property type="protein sequence ID" value="AAC43346.1"/>
    <property type="molecule type" value="Genomic_DNA"/>
</dbReference>
<dbReference type="EMBL" id="AE006468">
    <property type="protein sequence ID" value="AAL21332.1"/>
    <property type="status" value="ALT_INIT"/>
    <property type="molecule type" value="Genomic_DNA"/>
</dbReference>
<dbReference type="RefSeq" id="NP_461373.2">
    <property type="nucleotide sequence ID" value="NC_003197.2"/>
</dbReference>
<dbReference type="STRING" id="99287.STM2438"/>
<dbReference type="PaxDb" id="99287-STM2438"/>
<dbReference type="GeneID" id="1253960"/>
<dbReference type="KEGG" id="stm:STM2438"/>
<dbReference type="HOGENOM" id="CLU_128254_0_0_6"/>
<dbReference type="PhylomeDB" id="P40195"/>
<dbReference type="Proteomes" id="UP000001014">
    <property type="component" value="Chromosome"/>
</dbReference>
<dbReference type="InterPro" id="IPR035242">
    <property type="entry name" value="DUF5329"/>
</dbReference>
<dbReference type="NCBIfam" id="NF007646">
    <property type="entry name" value="PRK10318.1-3"/>
    <property type="match status" value="1"/>
</dbReference>
<dbReference type="Pfam" id="PF17263">
    <property type="entry name" value="DUF5329"/>
    <property type="match status" value="1"/>
</dbReference>
<proteinExistence type="inferred from homology"/>
<feature type="signal peptide" evidence="1">
    <location>
        <begin position="1"/>
        <end position="19"/>
    </location>
</feature>
<feature type="chain" id="PRO_0000013884" description="Uncharacterized protein YfeK">
    <location>
        <begin position="20"/>
        <end position="120"/>
    </location>
</feature>
<feature type="sequence conflict" description="In Ref. 1; AAC43346." evidence="2" ref="1">
    <original>NV</original>
    <variation>KL</variation>
    <location>
        <begin position="20"/>
        <end position="21"/>
    </location>
</feature>
<feature type="sequence conflict" description="In Ref. 1; AAC43346." evidence="2" ref="1">
    <original>I</original>
    <variation>F</variation>
    <location>
        <position position="71"/>
    </location>
</feature>
<feature type="sequence conflict" description="In Ref. 1; AAC43346." evidence="2" ref="1">
    <original>SS</original>
    <variation>PP</variation>
    <location>
        <begin position="85"/>
        <end position="86"/>
    </location>
</feature>
<comment type="sequence caution" evidence="2">
    <conflict type="erroneous initiation">
        <sequence resource="EMBL-CDS" id="AAL21332"/>
    </conflict>
</comment>